<feature type="chain" id="PRO_0000356095" description="Pentatricopeptide repeat-containing protein At3g16010">
    <location>
        <begin position="1"/>
        <end position="642"/>
    </location>
</feature>
<feature type="repeat" description="PPR 1">
    <location>
        <begin position="125"/>
        <end position="159"/>
    </location>
</feature>
<feature type="repeat" description="PPR 2">
    <location>
        <begin position="161"/>
        <end position="195"/>
    </location>
</feature>
<feature type="repeat" description="PPR 3">
    <location>
        <begin position="196"/>
        <end position="230"/>
    </location>
</feature>
<feature type="repeat" description="PPR 4">
    <location>
        <begin position="232"/>
        <end position="266"/>
    </location>
</feature>
<feature type="repeat" description="PPR 5">
    <location>
        <begin position="267"/>
        <end position="301"/>
    </location>
</feature>
<feature type="repeat" description="PPR 6">
    <location>
        <begin position="302"/>
        <end position="336"/>
    </location>
</feature>
<feature type="repeat" description="PPR 7">
    <location>
        <begin position="337"/>
        <end position="371"/>
    </location>
</feature>
<feature type="repeat" description="PPR 8">
    <location>
        <begin position="372"/>
        <end position="407"/>
    </location>
</feature>
<feature type="repeat" description="PPR 9">
    <location>
        <begin position="408"/>
        <end position="442"/>
    </location>
</feature>
<feature type="repeat" description="PPR 10">
    <location>
        <begin position="443"/>
        <end position="473"/>
    </location>
</feature>
<feature type="repeat" description="PPR 11">
    <location>
        <begin position="478"/>
        <end position="512"/>
    </location>
</feature>
<feature type="repeat" description="PPR 12">
    <location>
        <begin position="513"/>
        <end position="547"/>
    </location>
</feature>
<feature type="repeat" description="PPR 13">
    <location>
        <begin position="548"/>
        <end position="582"/>
    </location>
</feature>
<feature type="repeat" description="PPR 14">
    <location>
        <begin position="583"/>
        <end position="617"/>
    </location>
</feature>
<feature type="sequence conflict" description="In Ref. 3; AAO42273." evidence="1" ref="3">
    <original>N</original>
    <variation>D</variation>
    <location>
        <position position="464"/>
    </location>
</feature>
<name>PP236_ARATH</name>
<dbReference type="EMBL" id="AB012247">
    <property type="protein sequence ID" value="BAB02667.1"/>
    <property type="molecule type" value="Genomic_DNA"/>
</dbReference>
<dbReference type="EMBL" id="CP002686">
    <property type="protein sequence ID" value="AEE75762.1"/>
    <property type="molecule type" value="Genomic_DNA"/>
</dbReference>
<dbReference type="EMBL" id="BT004272">
    <property type="protein sequence ID" value="AAO42273.1"/>
    <property type="molecule type" value="mRNA"/>
</dbReference>
<dbReference type="RefSeq" id="NP_188222.1">
    <property type="nucleotide sequence ID" value="NM_112471.3"/>
</dbReference>
<dbReference type="SMR" id="Q9LW84"/>
<dbReference type="FunCoup" id="Q9LW84">
    <property type="interactions" value="608"/>
</dbReference>
<dbReference type="STRING" id="3702.Q9LW84"/>
<dbReference type="iPTMnet" id="Q9LW84"/>
<dbReference type="PaxDb" id="3702-AT3G16010.1"/>
<dbReference type="ProteomicsDB" id="248950"/>
<dbReference type="EnsemblPlants" id="AT3G16010.1">
    <property type="protein sequence ID" value="AT3G16010.1"/>
    <property type="gene ID" value="AT3G16010"/>
</dbReference>
<dbReference type="GeneID" id="820846"/>
<dbReference type="Gramene" id="AT3G16010.1">
    <property type="protein sequence ID" value="AT3G16010.1"/>
    <property type="gene ID" value="AT3G16010"/>
</dbReference>
<dbReference type="KEGG" id="ath:AT3G16010"/>
<dbReference type="Araport" id="AT3G16010"/>
<dbReference type="TAIR" id="AT3G16010">
    <property type="gene designation" value="MISF68"/>
</dbReference>
<dbReference type="eggNOG" id="KOG4197">
    <property type="taxonomic scope" value="Eukaryota"/>
</dbReference>
<dbReference type="HOGENOM" id="CLU_002706_49_12_1"/>
<dbReference type="InParanoid" id="Q9LW84"/>
<dbReference type="OMA" id="RKCKPTS"/>
<dbReference type="PhylomeDB" id="Q9LW84"/>
<dbReference type="PRO" id="PR:Q9LW84"/>
<dbReference type="Proteomes" id="UP000006548">
    <property type="component" value="Chromosome 3"/>
</dbReference>
<dbReference type="ExpressionAtlas" id="Q9LW84">
    <property type="expression patterns" value="baseline and differential"/>
</dbReference>
<dbReference type="GO" id="GO:0005739">
    <property type="term" value="C:mitochondrion"/>
    <property type="evidence" value="ECO:0007669"/>
    <property type="project" value="GOC"/>
</dbReference>
<dbReference type="GO" id="GO:0000373">
    <property type="term" value="P:Group II intron splicing"/>
    <property type="evidence" value="ECO:0000315"/>
    <property type="project" value="TAIR"/>
</dbReference>
<dbReference type="GO" id="GO:0032981">
    <property type="term" value="P:mitochondrial respiratory chain complex I assembly"/>
    <property type="evidence" value="ECO:0000315"/>
    <property type="project" value="TAIR"/>
</dbReference>
<dbReference type="GO" id="GO:0000963">
    <property type="term" value="P:mitochondrial RNA processing"/>
    <property type="evidence" value="ECO:0000315"/>
    <property type="project" value="TAIR"/>
</dbReference>
<dbReference type="FunFam" id="1.25.40.10:FF:001582">
    <property type="entry name" value="Pentatricopeptide repeat-containing protein At3g16010"/>
    <property type="match status" value="1"/>
</dbReference>
<dbReference type="FunFam" id="1.25.40.10:FF:002083">
    <property type="entry name" value="Pentatricopeptide repeat-containing protein At3g16010"/>
    <property type="match status" value="1"/>
</dbReference>
<dbReference type="Gene3D" id="1.25.40.10">
    <property type="entry name" value="Tetratricopeptide repeat domain"/>
    <property type="match status" value="7"/>
</dbReference>
<dbReference type="InterPro" id="IPR002885">
    <property type="entry name" value="Pentatricopeptide_rpt"/>
</dbReference>
<dbReference type="InterPro" id="IPR011990">
    <property type="entry name" value="TPR-like_helical_dom_sf"/>
</dbReference>
<dbReference type="NCBIfam" id="TIGR00756">
    <property type="entry name" value="PPR"/>
    <property type="match status" value="11"/>
</dbReference>
<dbReference type="PANTHER" id="PTHR47447">
    <property type="entry name" value="OS03G0856100 PROTEIN"/>
    <property type="match status" value="1"/>
</dbReference>
<dbReference type="PANTHER" id="PTHR47447:SF28">
    <property type="entry name" value="PENTACOTRIPEPTIDE-REPEAT REGION OF PRORP DOMAIN-CONTAINING PROTEIN"/>
    <property type="match status" value="1"/>
</dbReference>
<dbReference type="Pfam" id="PF01535">
    <property type="entry name" value="PPR"/>
    <property type="match status" value="3"/>
</dbReference>
<dbReference type="Pfam" id="PF13041">
    <property type="entry name" value="PPR_2"/>
    <property type="match status" value="5"/>
</dbReference>
<dbReference type="SUPFAM" id="SSF81901">
    <property type="entry name" value="HCP-like"/>
    <property type="match status" value="2"/>
</dbReference>
<dbReference type="PROSITE" id="PS51375">
    <property type="entry name" value="PPR"/>
    <property type="match status" value="14"/>
</dbReference>
<evidence type="ECO:0000305" key="1"/>
<comment type="similarity">
    <text evidence="1">Belongs to the PPR family. P subfamily.</text>
</comment>
<comment type="online information" name="Pentatricopeptide repeat proteins">
    <link uri="https://ppr.plantenergy.uwa.edu.au"/>
</comment>
<protein>
    <recommendedName>
        <fullName>Pentatricopeptide repeat-containing protein At3g16010</fullName>
    </recommendedName>
</protein>
<proteinExistence type="evidence at transcript level"/>
<reference key="1">
    <citation type="journal article" date="2000" name="DNA Res.">
        <title>Structural analysis of Arabidopsis thaliana chromosome 3. I. Sequence features of the regions of 4,504,864 bp covered by sixty P1 and TAC clones.</title>
        <authorList>
            <person name="Sato S."/>
            <person name="Nakamura Y."/>
            <person name="Kaneko T."/>
            <person name="Katoh T."/>
            <person name="Asamizu E."/>
            <person name="Tabata S."/>
        </authorList>
    </citation>
    <scope>NUCLEOTIDE SEQUENCE [LARGE SCALE GENOMIC DNA]</scope>
    <source>
        <strain>cv. Columbia</strain>
    </source>
</reference>
<reference key="2">
    <citation type="journal article" date="2017" name="Plant J.">
        <title>Araport11: a complete reannotation of the Arabidopsis thaliana reference genome.</title>
        <authorList>
            <person name="Cheng C.Y."/>
            <person name="Krishnakumar V."/>
            <person name="Chan A.P."/>
            <person name="Thibaud-Nissen F."/>
            <person name="Schobel S."/>
            <person name="Town C.D."/>
        </authorList>
    </citation>
    <scope>GENOME REANNOTATION</scope>
    <source>
        <strain>cv. Columbia</strain>
    </source>
</reference>
<reference key="3">
    <citation type="journal article" date="2003" name="Science">
        <title>Empirical analysis of transcriptional activity in the Arabidopsis genome.</title>
        <authorList>
            <person name="Yamada K."/>
            <person name="Lim J."/>
            <person name="Dale J.M."/>
            <person name="Chen H."/>
            <person name="Shinn P."/>
            <person name="Palm C.J."/>
            <person name="Southwick A.M."/>
            <person name="Wu H.C."/>
            <person name="Kim C.J."/>
            <person name="Nguyen M."/>
            <person name="Pham P.K."/>
            <person name="Cheuk R.F."/>
            <person name="Karlin-Newmann G."/>
            <person name="Liu S.X."/>
            <person name="Lam B."/>
            <person name="Sakano H."/>
            <person name="Wu T."/>
            <person name="Yu G."/>
            <person name="Miranda M."/>
            <person name="Quach H.L."/>
            <person name="Tripp M."/>
            <person name="Chang C.H."/>
            <person name="Lee J.M."/>
            <person name="Toriumi M.J."/>
            <person name="Chan M.M."/>
            <person name="Tang C.C."/>
            <person name="Onodera C.S."/>
            <person name="Deng J.M."/>
            <person name="Akiyama K."/>
            <person name="Ansari Y."/>
            <person name="Arakawa T."/>
            <person name="Banh J."/>
            <person name="Banno F."/>
            <person name="Bowser L."/>
            <person name="Brooks S.Y."/>
            <person name="Carninci P."/>
            <person name="Chao Q."/>
            <person name="Choy N."/>
            <person name="Enju A."/>
            <person name="Goldsmith A.D."/>
            <person name="Gurjal M."/>
            <person name="Hansen N.F."/>
            <person name="Hayashizaki Y."/>
            <person name="Johnson-Hopson C."/>
            <person name="Hsuan V.W."/>
            <person name="Iida K."/>
            <person name="Karnes M."/>
            <person name="Khan S."/>
            <person name="Koesema E."/>
            <person name="Ishida J."/>
            <person name="Jiang P.X."/>
            <person name="Jones T."/>
            <person name="Kawai J."/>
            <person name="Kamiya A."/>
            <person name="Meyers C."/>
            <person name="Nakajima M."/>
            <person name="Narusaka M."/>
            <person name="Seki M."/>
            <person name="Sakurai T."/>
            <person name="Satou M."/>
            <person name="Tamse R."/>
            <person name="Vaysberg M."/>
            <person name="Wallender E.K."/>
            <person name="Wong C."/>
            <person name="Yamamura Y."/>
            <person name="Yuan S."/>
            <person name="Shinozaki K."/>
            <person name="Davis R.W."/>
            <person name="Theologis A."/>
            <person name="Ecker J.R."/>
        </authorList>
    </citation>
    <scope>NUCLEOTIDE SEQUENCE [LARGE SCALE MRNA]</scope>
    <source>
        <strain>cv. Columbia</strain>
    </source>
</reference>
<reference key="4">
    <citation type="journal article" date="2004" name="Plant Cell">
        <title>Genome-wide analysis of Arabidopsis pentatricopeptide repeat proteins reveals their essential role in organelle biogenesis.</title>
        <authorList>
            <person name="Lurin C."/>
            <person name="Andres C."/>
            <person name="Aubourg S."/>
            <person name="Bellaoui M."/>
            <person name="Bitton F."/>
            <person name="Bruyere C."/>
            <person name="Caboche M."/>
            <person name="Debast C."/>
            <person name="Gualberto J."/>
            <person name="Hoffmann B."/>
            <person name="Lecharny A."/>
            <person name="Le Ret M."/>
            <person name="Martin-Magniette M.-L."/>
            <person name="Mireau H."/>
            <person name="Peeters N."/>
            <person name="Renou J.-P."/>
            <person name="Szurek B."/>
            <person name="Taconnat L."/>
            <person name="Small I."/>
        </authorList>
    </citation>
    <scope>GENE FAMILY</scope>
</reference>
<sequence length="642" mass="72925">MMYVSARSGSAKRSISSLPHLSQRFKQTENEIVQMFSVPNHEESEKPQEKWKLSRKDPSVRMLDERFIRIVKIFKWGPDAEKALEVLKLKVDHRLVRSILEIDVEINVKIQFFKWAGKRRNFQHDCSTYMTLIRCLEEARLYGEMYRTIQEVVRNTYVSVSPAVLSELVKALGRAKMVSKALSVFYQAKGRKCKPTSSTYNSVILMLMQEGQHEKVHEVYTEMCNEGDCFPDTITYSALISSYEKLGRNDSAIRLFDEMKDNCMQPTEKIYTTLLGIYFKVGKVEKALDLFEEMKRAGCSPTVYTYTELIKGLGKAGRVDEAYGFYKDMLRDGLTPDVVFLNNLMNILGKVGRVEELTNVFSEMGMWRCTPTVVSYNTVIKALFESKAHVSEVSSWFDKMKADSVSPSEFTYSILIDGYCKTNRVEKALLLLEEMDEKGFPPCPAAYCSLINALGKAKRYEAANELFKELKENFGNVSSRVYAVMIKHFGKCGKLSEAVDLFNEMKNQGSGPDVYAYNALMSGMVKAGMINEANSLLRKMEENGCRADINSHNIILNGFARTGVPRRAIEMFETIKHSGIKPDGVTYNTLLGCFAHAGMFEEAARMMREMKDKGFEYDAITYSSILDAVGNVDHEKDDVSSF</sequence>
<gene>
    <name type="ordered locus">At3g16010</name>
    <name type="ORF">MSL1.5</name>
</gene>
<keyword id="KW-1185">Reference proteome</keyword>
<keyword id="KW-0677">Repeat</keyword>
<organism>
    <name type="scientific">Arabidopsis thaliana</name>
    <name type="common">Mouse-ear cress</name>
    <dbReference type="NCBI Taxonomy" id="3702"/>
    <lineage>
        <taxon>Eukaryota</taxon>
        <taxon>Viridiplantae</taxon>
        <taxon>Streptophyta</taxon>
        <taxon>Embryophyta</taxon>
        <taxon>Tracheophyta</taxon>
        <taxon>Spermatophyta</taxon>
        <taxon>Magnoliopsida</taxon>
        <taxon>eudicotyledons</taxon>
        <taxon>Gunneridae</taxon>
        <taxon>Pentapetalae</taxon>
        <taxon>rosids</taxon>
        <taxon>malvids</taxon>
        <taxon>Brassicales</taxon>
        <taxon>Brassicaceae</taxon>
        <taxon>Camelineae</taxon>
        <taxon>Arabidopsis</taxon>
    </lineage>
</organism>
<accession>Q9LW84</accession>
<accession>Q84W36</accession>